<reference key="1">
    <citation type="journal article" date="1991" name="Plant Physiol.">
        <title>Primary structures of Arabidopsis calmodulin isoforms deduced from the sequences of cDNA clones.</title>
        <authorList>
            <person name="Ling V."/>
            <person name="Perera I.Y."/>
            <person name="Zielinski R.E."/>
        </authorList>
    </citation>
    <scope>NUCLEOTIDE SEQUENCE [MRNA]</scope>
</reference>
<reference key="2">
    <citation type="journal article" date="1999" name="Nature">
        <title>Sequence and analysis of chromosome 2 of the plant Arabidopsis thaliana.</title>
        <authorList>
            <person name="Lin X."/>
            <person name="Kaul S."/>
            <person name="Rounsley S.D."/>
            <person name="Shea T.P."/>
            <person name="Benito M.-I."/>
            <person name="Town C.D."/>
            <person name="Fujii C.Y."/>
            <person name="Mason T.M."/>
            <person name="Bowman C.L."/>
            <person name="Barnstead M.E."/>
            <person name="Feldblyum T.V."/>
            <person name="Buell C.R."/>
            <person name="Ketchum K.A."/>
            <person name="Lee J.J."/>
            <person name="Ronning C.M."/>
            <person name="Koo H.L."/>
            <person name="Moffat K.S."/>
            <person name="Cronin L.A."/>
            <person name="Shen M."/>
            <person name="Pai G."/>
            <person name="Van Aken S."/>
            <person name="Umayam L."/>
            <person name="Tallon L.J."/>
            <person name="Gill J.E."/>
            <person name="Adams M.D."/>
            <person name="Carrera A.J."/>
            <person name="Creasy T.H."/>
            <person name="Goodman H.M."/>
            <person name="Somerville C.R."/>
            <person name="Copenhaver G.P."/>
            <person name="Preuss D."/>
            <person name="Nierman W.C."/>
            <person name="White O."/>
            <person name="Eisen J.A."/>
            <person name="Salzberg S.L."/>
            <person name="Fraser C.M."/>
            <person name="Venter J.C."/>
        </authorList>
    </citation>
    <scope>NUCLEOTIDE SEQUENCE [LARGE SCALE GENOMIC DNA]</scope>
    <source>
        <strain>cv. Columbia</strain>
    </source>
</reference>
<reference key="3">
    <citation type="journal article" date="2017" name="Plant J.">
        <title>Araport11: a complete reannotation of the Arabidopsis thaliana reference genome.</title>
        <authorList>
            <person name="Cheng C.Y."/>
            <person name="Krishnakumar V."/>
            <person name="Chan A.P."/>
            <person name="Thibaud-Nissen F."/>
            <person name="Schobel S."/>
            <person name="Town C.D."/>
        </authorList>
    </citation>
    <scope>GENOME REANNOTATION</scope>
    <source>
        <strain>cv. Columbia</strain>
    </source>
</reference>
<reference key="4">
    <citation type="journal article" date="2003" name="Science">
        <title>Empirical analysis of transcriptional activity in the Arabidopsis genome.</title>
        <authorList>
            <person name="Yamada K."/>
            <person name="Lim J."/>
            <person name="Dale J.M."/>
            <person name="Chen H."/>
            <person name="Shinn P."/>
            <person name="Palm C.J."/>
            <person name="Southwick A.M."/>
            <person name="Wu H.C."/>
            <person name="Kim C.J."/>
            <person name="Nguyen M."/>
            <person name="Pham P.K."/>
            <person name="Cheuk R.F."/>
            <person name="Karlin-Newmann G."/>
            <person name="Liu S.X."/>
            <person name="Lam B."/>
            <person name="Sakano H."/>
            <person name="Wu T."/>
            <person name="Yu G."/>
            <person name="Miranda M."/>
            <person name="Quach H.L."/>
            <person name="Tripp M."/>
            <person name="Chang C.H."/>
            <person name="Lee J.M."/>
            <person name="Toriumi M.J."/>
            <person name="Chan M.M."/>
            <person name="Tang C.C."/>
            <person name="Onodera C.S."/>
            <person name="Deng J.M."/>
            <person name="Akiyama K."/>
            <person name="Ansari Y."/>
            <person name="Arakawa T."/>
            <person name="Banh J."/>
            <person name="Banno F."/>
            <person name="Bowser L."/>
            <person name="Brooks S.Y."/>
            <person name="Carninci P."/>
            <person name="Chao Q."/>
            <person name="Choy N."/>
            <person name="Enju A."/>
            <person name="Goldsmith A.D."/>
            <person name="Gurjal M."/>
            <person name="Hansen N.F."/>
            <person name="Hayashizaki Y."/>
            <person name="Johnson-Hopson C."/>
            <person name="Hsuan V.W."/>
            <person name="Iida K."/>
            <person name="Karnes M."/>
            <person name="Khan S."/>
            <person name="Koesema E."/>
            <person name="Ishida J."/>
            <person name="Jiang P.X."/>
            <person name="Jones T."/>
            <person name="Kawai J."/>
            <person name="Kamiya A."/>
            <person name="Meyers C."/>
            <person name="Nakajima M."/>
            <person name="Narusaka M."/>
            <person name="Seki M."/>
            <person name="Sakurai T."/>
            <person name="Satou M."/>
            <person name="Tamse R."/>
            <person name="Vaysberg M."/>
            <person name="Wallender E.K."/>
            <person name="Wong C."/>
            <person name="Yamamura Y."/>
            <person name="Yuan S."/>
            <person name="Shinozaki K."/>
            <person name="Davis R.W."/>
            <person name="Theologis A."/>
            <person name="Ecker J.R."/>
        </authorList>
    </citation>
    <scope>NUCLEOTIDE SEQUENCE [LARGE SCALE MRNA]</scope>
    <source>
        <strain>cv. Columbia</strain>
    </source>
</reference>
<reference key="5">
    <citation type="submission" date="2004-09" db="EMBL/GenBank/DDBJ databases">
        <title>Large-scale analysis of RIKEN Arabidopsis full-length (RAFL) cDNAs.</title>
        <authorList>
            <person name="Totoki Y."/>
            <person name="Seki M."/>
            <person name="Ishida J."/>
            <person name="Nakajima M."/>
            <person name="Enju A."/>
            <person name="Kamiya A."/>
            <person name="Narusaka M."/>
            <person name="Shin-i T."/>
            <person name="Nakagawa M."/>
            <person name="Sakamoto N."/>
            <person name="Oishi K."/>
            <person name="Kohara Y."/>
            <person name="Kobayashi M."/>
            <person name="Toyoda A."/>
            <person name="Sakaki Y."/>
            <person name="Sakurai T."/>
            <person name="Iida K."/>
            <person name="Akiyama K."/>
            <person name="Satou M."/>
            <person name="Toyoda T."/>
            <person name="Konagaya A."/>
            <person name="Carninci P."/>
            <person name="Kawai J."/>
            <person name="Hayashizaki Y."/>
            <person name="Shinozaki K."/>
        </authorList>
    </citation>
    <scope>NUCLEOTIDE SEQUENCE [LARGE SCALE MRNA]</scope>
    <source>
        <strain>cv. Columbia</strain>
    </source>
</reference>
<reference key="6">
    <citation type="journal article" date="1990" name="Cell">
        <title>Rain-, wind-, and touch-induced expression of calmodulin and calmodulin-related genes in Arabidopsis.</title>
        <authorList>
            <person name="Braam J."/>
            <person name="Davis R.W."/>
        </authorList>
    </citation>
    <scope>NUCLEOTIDE SEQUENCE [MRNA] OF 13-149</scope>
    <scope>INDUCTION</scope>
    <source>
        <strain>cv. Columbia</strain>
    </source>
</reference>
<reference key="7">
    <citation type="journal article" date="2003" name="New Phytol.">
        <title>Calmodulins and related potential calcium sensors of Arabidopsis.</title>
        <authorList>
            <person name="McCormack E."/>
            <person name="Braam J."/>
        </authorList>
    </citation>
    <scope>GENE FAMILY</scope>
    <scope>NOMENCLATURE</scope>
</reference>
<reference key="8">
    <citation type="journal article" date="2012" name="Plant Mol. Biol.">
        <title>AtIQM1, a novel calmodulin-binding protein, is involved in stomatal movement in Arabidopsis.</title>
        <authorList>
            <person name="Zhou Y.P."/>
            <person name="Duan J."/>
            <person name="Fujibe T."/>
            <person name="Yamamoto K.T."/>
            <person name="Tian C.E."/>
        </authorList>
    </citation>
    <scope>INTERACTION WITH IQM1</scope>
</reference>
<comment type="function">
    <text>Calmodulin mediates the control of a large number of enzymes, ion channels and other proteins by Ca(2+). Among the enzymes to be stimulated by the calmodulin-Ca(2+) complex are a number of protein kinases and phosphatases.</text>
</comment>
<comment type="subunit">
    <text evidence="2">Interacts with IQM1 (via IQ domain).</text>
</comment>
<comment type="interaction">
    <interactant intactId="EBI-1749673">
        <id>Q682T9</id>
    </interactant>
    <interactant intactId="EBI-1749651">
        <id>Q9FHN8</id>
        <label>KIN14E</label>
    </interactant>
    <organismsDiffer>false</organismsDiffer>
    <experiments>2</experiments>
</comment>
<comment type="alternative products">
    <event type="alternative splicing"/>
    <isoform>
        <id>Q682T9-1</id>
        <name>1</name>
        <sequence type="displayed"/>
    </isoform>
    <text>A number of isoforms are produced. According to EST sequences.</text>
</comment>
<comment type="induction">
    <text evidence="3">By rain-, wind-, and touch (thigmomorphogenesis).</text>
</comment>
<comment type="miscellaneous">
    <text>This protein has four functional calcium-binding sites.</text>
</comment>
<comment type="similarity">
    <text evidence="4">Belongs to the calmodulin family.</text>
</comment>
<organism>
    <name type="scientific">Arabidopsis thaliana</name>
    <name type="common">Mouse-ear cress</name>
    <dbReference type="NCBI Taxonomy" id="3702"/>
    <lineage>
        <taxon>Eukaryota</taxon>
        <taxon>Viridiplantae</taxon>
        <taxon>Streptophyta</taxon>
        <taxon>Embryophyta</taxon>
        <taxon>Tracheophyta</taxon>
        <taxon>Spermatophyta</taxon>
        <taxon>Magnoliopsida</taxon>
        <taxon>eudicotyledons</taxon>
        <taxon>Gunneridae</taxon>
        <taxon>Pentapetalae</taxon>
        <taxon>rosids</taxon>
        <taxon>malvids</taxon>
        <taxon>Brassicales</taxon>
        <taxon>Brassicaceae</taxon>
        <taxon>Camelineae</taxon>
        <taxon>Arabidopsis</taxon>
    </lineage>
</organism>
<sequence>MADQLTDDQISEFKEAFSLFDKDGDGCITTKELGTVMRSLGQNPTEAELQDMINEVDADGNGTIDFPEFLNLMARKMKDTDSEEELKEAFRVFDKDQNGFISAAELRHVMTNLGEKLTDEEVDEMIKEADVDGDGQINYEEFVKVMMAK</sequence>
<feature type="chain" id="PRO_0000415792" description="Calmodulin-5">
    <location>
        <begin position="1"/>
        <end position="149"/>
    </location>
</feature>
<feature type="domain" description="EF-hand 1" evidence="1">
    <location>
        <begin position="8"/>
        <end position="43"/>
    </location>
</feature>
<feature type="domain" description="EF-hand 2" evidence="1">
    <location>
        <begin position="44"/>
        <end position="79"/>
    </location>
</feature>
<feature type="domain" description="EF-hand 3" evidence="1">
    <location>
        <begin position="81"/>
        <end position="116"/>
    </location>
</feature>
<feature type="domain" description="EF-hand 4" evidence="1">
    <location>
        <begin position="117"/>
        <end position="149"/>
    </location>
</feature>
<feature type="binding site" evidence="1">
    <location>
        <position position="21"/>
    </location>
    <ligand>
        <name>Ca(2+)</name>
        <dbReference type="ChEBI" id="CHEBI:29108"/>
        <label>1</label>
    </ligand>
</feature>
<feature type="binding site" evidence="1">
    <location>
        <position position="23"/>
    </location>
    <ligand>
        <name>Ca(2+)</name>
        <dbReference type="ChEBI" id="CHEBI:29108"/>
        <label>1</label>
    </ligand>
</feature>
<feature type="binding site" evidence="1">
    <location>
        <position position="25"/>
    </location>
    <ligand>
        <name>Ca(2+)</name>
        <dbReference type="ChEBI" id="CHEBI:29108"/>
        <label>1</label>
    </ligand>
</feature>
<feature type="binding site" evidence="1">
    <location>
        <position position="27"/>
    </location>
    <ligand>
        <name>Ca(2+)</name>
        <dbReference type="ChEBI" id="CHEBI:29108"/>
        <label>1</label>
    </ligand>
</feature>
<feature type="binding site" evidence="1">
    <location>
        <position position="32"/>
    </location>
    <ligand>
        <name>Ca(2+)</name>
        <dbReference type="ChEBI" id="CHEBI:29108"/>
        <label>1</label>
    </ligand>
</feature>
<feature type="binding site" evidence="1">
    <location>
        <position position="57"/>
    </location>
    <ligand>
        <name>Ca(2+)</name>
        <dbReference type="ChEBI" id="CHEBI:29108"/>
        <label>2</label>
    </ligand>
</feature>
<feature type="binding site" evidence="1">
    <location>
        <position position="59"/>
    </location>
    <ligand>
        <name>Ca(2+)</name>
        <dbReference type="ChEBI" id="CHEBI:29108"/>
        <label>2</label>
    </ligand>
</feature>
<feature type="binding site" evidence="1">
    <location>
        <position position="61"/>
    </location>
    <ligand>
        <name>Ca(2+)</name>
        <dbReference type="ChEBI" id="CHEBI:29108"/>
        <label>2</label>
    </ligand>
</feature>
<feature type="binding site" evidence="1">
    <location>
        <position position="63"/>
    </location>
    <ligand>
        <name>Ca(2+)</name>
        <dbReference type="ChEBI" id="CHEBI:29108"/>
        <label>2</label>
    </ligand>
</feature>
<feature type="binding site" evidence="1">
    <location>
        <position position="68"/>
    </location>
    <ligand>
        <name>Ca(2+)</name>
        <dbReference type="ChEBI" id="CHEBI:29108"/>
        <label>2</label>
    </ligand>
</feature>
<feature type="binding site" evidence="1">
    <location>
        <position position="94"/>
    </location>
    <ligand>
        <name>Ca(2+)</name>
        <dbReference type="ChEBI" id="CHEBI:29108"/>
        <label>3</label>
    </ligand>
</feature>
<feature type="binding site" evidence="1">
    <location>
        <position position="96"/>
    </location>
    <ligand>
        <name>Ca(2+)</name>
        <dbReference type="ChEBI" id="CHEBI:29108"/>
        <label>3</label>
    </ligand>
</feature>
<feature type="binding site" evidence="1">
    <location>
        <position position="98"/>
    </location>
    <ligand>
        <name>Ca(2+)</name>
        <dbReference type="ChEBI" id="CHEBI:29108"/>
        <label>3</label>
    </ligand>
</feature>
<feature type="binding site" evidence="1">
    <location>
        <position position="105"/>
    </location>
    <ligand>
        <name>Ca(2+)</name>
        <dbReference type="ChEBI" id="CHEBI:29108"/>
        <label>3</label>
    </ligand>
</feature>
<feature type="binding site" evidence="1">
    <location>
        <position position="130"/>
    </location>
    <ligand>
        <name>Ca(2+)</name>
        <dbReference type="ChEBI" id="CHEBI:29108"/>
        <label>4</label>
    </ligand>
</feature>
<feature type="binding site" evidence="1">
    <location>
        <position position="132"/>
    </location>
    <ligand>
        <name>Ca(2+)</name>
        <dbReference type="ChEBI" id="CHEBI:29108"/>
        <label>4</label>
    </ligand>
</feature>
<feature type="binding site" evidence="1">
    <location>
        <position position="134"/>
    </location>
    <ligand>
        <name>Ca(2+)</name>
        <dbReference type="ChEBI" id="CHEBI:29108"/>
        <label>4</label>
    </ligand>
</feature>
<feature type="binding site" evidence="1">
    <location>
        <position position="136"/>
    </location>
    <ligand>
        <name>Ca(2+)</name>
        <dbReference type="ChEBI" id="CHEBI:29108"/>
        <label>4</label>
    </ligand>
</feature>
<feature type="binding site" evidence="1">
    <location>
        <position position="141"/>
    </location>
    <ligand>
        <name>Ca(2+)</name>
        <dbReference type="ChEBI" id="CHEBI:29108"/>
        <label>4</label>
    </ligand>
</feature>
<evidence type="ECO:0000255" key="1">
    <source>
        <dbReference type="PROSITE-ProRule" id="PRU00448"/>
    </source>
</evidence>
<evidence type="ECO:0000269" key="2">
    <source>
    </source>
</evidence>
<evidence type="ECO:0000269" key="3">
    <source>
    </source>
</evidence>
<evidence type="ECO:0000305" key="4"/>
<name>CALM5_ARATH</name>
<protein>
    <recommendedName>
        <fullName>Calmodulin-5</fullName>
        <shortName>CaM-5</shortName>
    </recommendedName>
</protein>
<gene>
    <name type="primary">CAM5</name>
    <name type="synonym">TCH1</name>
    <name type="ordered locus">At2g27030</name>
    <name type="ORF">T20P8.8</name>
</gene>
<proteinExistence type="evidence at protein level"/>
<dbReference type="EMBL" id="M38380">
    <property type="protein sequence ID" value="AAA32763.1"/>
    <property type="molecule type" value="mRNA"/>
</dbReference>
<dbReference type="EMBL" id="AC005623">
    <property type="protein sequence ID" value="AAC77861.1"/>
    <property type="molecule type" value="Genomic_DNA"/>
</dbReference>
<dbReference type="EMBL" id="CP002685">
    <property type="protein sequence ID" value="AEC07924.1"/>
    <property type="molecule type" value="Genomic_DNA"/>
</dbReference>
<dbReference type="EMBL" id="BT002351">
    <property type="protein sequence ID" value="AAN86184.1"/>
    <property type="molecule type" value="mRNA"/>
</dbReference>
<dbReference type="EMBL" id="AK175278">
    <property type="protein sequence ID" value="BAD43041.1"/>
    <property type="molecule type" value="mRNA"/>
</dbReference>
<dbReference type="EMBL" id="AK176855">
    <property type="protein sequence ID" value="BAD44618.1"/>
    <property type="molecule type" value="mRNA"/>
</dbReference>
<dbReference type="PIR" id="H84667">
    <property type="entry name" value="H84667"/>
</dbReference>
<dbReference type="PIR" id="S22503">
    <property type="entry name" value="S22503"/>
</dbReference>
<dbReference type="RefSeq" id="NP_180271.1">
    <molecule id="Q682T9-1"/>
    <property type="nucleotide sequence ID" value="NM_128261.5"/>
</dbReference>
<dbReference type="RefSeq" id="NP_191239.1">
    <molecule id="Q682T9-1"/>
    <property type="nucleotide sequence ID" value="NM_115539.5"/>
</dbReference>
<dbReference type="RefSeq" id="NP_850344.1">
    <molecule id="Q682T9-1"/>
    <property type="nucleotide sequence ID" value="NM_180013.3"/>
</dbReference>
<dbReference type="SMR" id="Q682T9"/>
<dbReference type="BioGRID" id="10163">
    <property type="interactions" value="5"/>
</dbReference>
<dbReference type="BioGRID" id="2597">
    <property type="interactions" value="11"/>
</dbReference>
<dbReference type="BioGRID" id="4047">
    <property type="interactions" value="3"/>
</dbReference>
<dbReference type="FunCoup" id="Q682T9">
    <property type="interactions" value="2640"/>
</dbReference>
<dbReference type="IntAct" id="Q682T9">
    <property type="interactions" value="1"/>
</dbReference>
<dbReference type="STRING" id="3702.Q682T9"/>
<dbReference type="EnsemblPlants" id="AT2G27030.1">
    <molecule id="Q682T9-1"/>
    <property type="protein sequence ID" value="AT2G27030.1"/>
    <property type="gene ID" value="AT2G27030"/>
</dbReference>
<dbReference type="EnsemblPlants" id="AT2G41110.1">
    <molecule id="Q682T9-1"/>
    <property type="protein sequence ID" value="AT2G41110.1"/>
    <property type="gene ID" value="AT2G41110"/>
</dbReference>
<dbReference type="EnsemblPlants" id="AT3G56800.1">
    <molecule id="Q682T9-1"/>
    <property type="protein sequence ID" value="AT3G56800.1"/>
    <property type="gene ID" value="AT3G56800"/>
</dbReference>
<dbReference type="GeneID" id="817245"/>
<dbReference type="Gramene" id="AT2G27030.1">
    <molecule id="Q682T9-1"/>
    <property type="protein sequence ID" value="AT2G27030.1"/>
    <property type="gene ID" value="AT2G27030"/>
</dbReference>
<dbReference type="Gramene" id="AT2G41110.1">
    <molecule id="Q682T9-1"/>
    <property type="protein sequence ID" value="AT2G41110.1"/>
    <property type="gene ID" value="AT2G41110"/>
</dbReference>
<dbReference type="Gramene" id="AT3G56800.1">
    <molecule id="Q682T9-1"/>
    <property type="protein sequence ID" value="AT3G56800.1"/>
    <property type="gene ID" value="AT3G56800"/>
</dbReference>
<dbReference type="KEGG" id="ath:AT2G27030"/>
<dbReference type="KEGG" id="ath:AT2G41110"/>
<dbReference type="KEGG" id="ath:AT3G56800"/>
<dbReference type="Araport" id="AT2G27030"/>
<dbReference type="TAIR" id="AT2G27030">
    <property type="gene designation" value="CAM5"/>
</dbReference>
<dbReference type="HOGENOM" id="CLU_061288_2_0_1"/>
<dbReference type="InParanoid" id="Q682T9"/>
<dbReference type="OMA" id="RIDCESI"/>
<dbReference type="OrthoDB" id="1042764at2759"/>
<dbReference type="PhylomeDB" id="Q682T9"/>
<dbReference type="CD-CODE" id="4299E36E">
    <property type="entry name" value="Nucleolus"/>
</dbReference>
<dbReference type="PRO" id="PR:Q682T9"/>
<dbReference type="Proteomes" id="UP000006548">
    <property type="component" value="Chromosome 2"/>
</dbReference>
<dbReference type="ExpressionAtlas" id="Q682T9">
    <property type="expression patterns" value="baseline and differential"/>
</dbReference>
<dbReference type="GO" id="GO:0005509">
    <property type="term" value="F:calcium ion binding"/>
    <property type="evidence" value="ECO:0007669"/>
    <property type="project" value="InterPro"/>
</dbReference>
<dbReference type="CDD" id="cd00051">
    <property type="entry name" value="EFh"/>
    <property type="match status" value="2"/>
</dbReference>
<dbReference type="FunFam" id="1.10.238.10:FF:000034">
    <property type="entry name" value="Calmodulin"/>
    <property type="match status" value="1"/>
</dbReference>
<dbReference type="FunFam" id="1.10.238.10:FF:000042">
    <property type="entry name" value="Calmodulin"/>
    <property type="match status" value="1"/>
</dbReference>
<dbReference type="Gene3D" id="1.10.238.10">
    <property type="entry name" value="EF-hand"/>
    <property type="match status" value="3"/>
</dbReference>
<dbReference type="InterPro" id="IPR050230">
    <property type="entry name" value="CALM/Myosin/TropC-like"/>
</dbReference>
<dbReference type="InterPro" id="IPR011992">
    <property type="entry name" value="EF-hand-dom_pair"/>
</dbReference>
<dbReference type="InterPro" id="IPR018247">
    <property type="entry name" value="EF_Hand_1_Ca_BS"/>
</dbReference>
<dbReference type="InterPro" id="IPR002048">
    <property type="entry name" value="EF_hand_dom"/>
</dbReference>
<dbReference type="PANTHER" id="PTHR23048:SF53">
    <property type="entry name" value="CALMODULIN"/>
    <property type="match status" value="1"/>
</dbReference>
<dbReference type="PANTHER" id="PTHR23048">
    <property type="entry name" value="MYOSIN LIGHT CHAIN 1, 3"/>
    <property type="match status" value="1"/>
</dbReference>
<dbReference type="Pfam" id="PF13499">
    <property type="entry name" value="EF-hand_7"/>
    <property type="match status" value="2"/>
</dbReference>
<dbReference type="SMART" id="SM00054">
    <property type="entry name" value="EFh"/>
    <property type="match status" value="4"/>
</dbReference>
<dbReference type="SUPFAM" id="SSF47473">
    <property type="entry name" value="EF-hand"/>
    <property type="match status" value="1"/>
</dbReference>
<dbReference type="PROSITE" id="PS00018">
    <property type="entry name" value="EF_HAND_1"/>
    <property type="match status" value="4"/>
</dbReference>
<dbReference type="PROSITE" id="PS50222">
    <property type="entry name" value="EF_HAND_2"/>
    <property type="match status" value="4"/>
</dbReference>
<keyword id="KW-0025">Alternative splicing</keyword>
<keyword id="KW-0106">Calcium</keyword>
<keyword id="KW-0479">Metal-binding</keyword>
<keyword id="KW-1185">Reference proteome</keyword>
<keyword id="KW-0677">Repeat</keyword>
<accession>Q682T9</accession>
<accession>P25069</accession>